<organism>
    <name type="scientific">Burkholderia pseudomallei (strain 668)</name>
    <dbReference type="NCBI Taxonomy" id="320373"/>
    <lineage>
        <taxon>Bacteria</taxon>
        <taxon>Pseudomonadati</taxon>
        <taxon>Pseudomonadota</taxon>
        <taxon>Betaproteobacteria</taxon>
        <taxon>Burkholderiales</taxon>
        <taxon>Burkholderiaceae</taxon>
        <taxon>Burkholderia</taxon>
        <taxon>pseudomallei group</taxon>
    </lineage>
</organism>
<proteinExistence type="inferred from homology"/>
<feature type="chain" id="PRO_1000016254" description="ATP phosphoribosyltransferase regulatory subunit">
    <location>
        <begin position="1"/>
        <end position="382"/>
    </location>
</feature>
<evidence type="ECO:0000255" key="1">
    <source>
        <dbReference type="HAMAP-Rule" id="MF_00125"/>
    </source>
</evidence>
<sequence length="382" mass="41794">MSTWLLPENIADVLPSEARKIEELRRRLLDRFRSYGYEMVMPPLLEYLESLLTSGGNELRLRTFKLVDQVSGRTLGLRADMTPQVARIDAHLLNRQGVTRLCYAGPVLHTRPRGLHASREQLQIGAEIYGHAGLEADQEIQQLMLDALHLTGLKKIRLDLCHAGVLAALFARDAAAAERGEALYEALAGKDVPRLNELTDDLGADTRAALRALPRLYGDASVLDDARRQLPALPEIARALDDLAHLAAQVKDAEVAIDLADLRGYAYHSGAMFAAYVDGVPNAVAHGGRYDHVGQAYGRARPATGFSLDLREIARISPVEARGAAILAPWKQDDALRAAVGALRDAGEVVIQALPGHDHVLDEFACDRALVERDGAWVIEPR</sequence>
<accession>A3NA43</accession>
<keyword id="KW-0028">Amino-acid biosynthesis</keyword>
<keyword id="KW-0963">Cytoplasm</keyword>
<keyword id="KW-0368">Histidine biosynthesis</keyword>
<reference key="1">
    <citation type="journal article" date="2010" name="Genome Biol. Evol.">
        <title>Continuing evolution of Burkholderia mallei through genome reduction and large-scale rearrangements.</title>
        <authorList>
            <person name="Losada L."/>
            <person name="Ronning C.M."/>
            <person name="DeShazer D."/>
            <person name="Woods D."/>
            <person name="Fedorova N."/>
            <person name="Kim H.S."/>
            <person name="Shabalina S.A."/>
            <person name="Pearson T.R."/>
            <person name="Brinkac L."/>
            <person name="Tan P."/>
            <person name="Nandi T."/>
            <person name="Crabtree J."/>
            <person name="Badger J."/>
            <person name="Beckstrom-Sternberg S."/>
            <person name="Saqib M."/>
            <person name="Schutzer S.E."/>
            <person name="Keim P."/>
            <person name="Nierman W.C."/>
        </authorList>
    </citation>
    <scope>NUCLEOTIDE SEQUENCE [LARGE SCALE GENOMIC DNA]</scope>
    <source>
        <strain>668</strain>
    </source>
</reference>
<protein>
    <recommendedName>
        <fullName evidence="1">ATP phosphoribosyltransferase regulatory subunit</fullName>
    </recommendedName>
</protein>
<comment type="function">
    <text evidence="1">Required for the first step of histidine biosynthesis. May allow the feedback regulation of ATP phosphoribosyltransferase activity by histidine.</text>
</comment>
<comment type="pathway">
    <text evidence="1">Amino-acid biosynthesis; L-histidine biosynthesis; L-histidine from 5-phospho-alpha-D-ribose 1-diphosphate: step 1/9.</text>
</comment>
<comment type="subunit">
    <text evidence="1">Heteromultimer composed of HisG and HisZ subunits.</text>
</comment>
<comment type="subcellular location">
    <subcellularLocation>
        <location evidence="1">Cytoplasm</location>
    </subcellularLocation>
</comment>
<comment type="miscellaneous">
    <text>This function is generally fulfilled by the C-terminal part of HisG, which is missing in some bacteria such as this one.</text>
</comment>
<comment type="similarity">
    <text evidence="1">Belongs to the class-II aminoacyl-tRNA synthetase family. HisZ subfamily.</text>
</comment>
<name>HISZ_BURP6</name>
<gene>
    <name evidence="1" type="primary">hisZ</name>
    <name type="ordered locus">BURPS668_2179</name>
</gene>
<dbReference type="EMBL" id="CP000570">
    <property type="protein sequence ID" value="ABN83029.1"/>
    <property type="molecule type" value="Genomic_DNA"/>
</dbReference>
<dbReference type="RefSeq" id="WP_004547319.1">
    <property type="nucleotide sequence ID" value="NC_009074.1"/>
</dbReference>
<dbReference type="SMR" id="A3NA43"/>
<dbReference type="KEGG" id="bpd:BURPS668_2179"/>
<dbReference type="HOGENOM" id="CLU_025113_0_1_4"/>
<dbReference type="UniPathway" id="UPA00031">
    <property type="reaction ID" value="UER00006"/>
</dbReference>
<dbReference type="GO" id="GO:0005737">
    <property type="term" value="C:cytoplasm"/>
    <property type="evidence" value="ECO:0007669"/>
    <property type="project" value="UniProtKB-SubCell"/>
</dbReference>
<dbReference type="GO" id="GO:0004821">
    <property type="term" value="F:histidine-tRNA ligase activity"/>
    <property type="evidence" value="ECO:0007669"/>
    <property type="project" value="TreeGrafter"/>
</dbReference>
<dbReference type="GO" id="GO:0006427">
    <property type="term" value="P:histidyl-tRNA aminoacylation"/>
    <property type="evidence" value="ECO:0007669"/>
    <property type="project" value="TreeGrafter"/>
</dbReference>
<dbReference type="GO" id="GO:0000105">
    <property type="term" value="P:L-histidine biosynthetic process"/>
    <property type="evidence" value="ECO:0007669"/>
    <property type="project" value="UniProtKB-UniRule"/>
</dbReference>
<dbReference type="CDD" id="cd00773">
    <property type="entry name" value="HisRS-like_core"/>
    <property type="match status" value="1"/>
</dbReference>
<dbReference type="Gene3D" id="3.30.930.10">
    <property type="entry name" value="Bira Bifunctional Protein, Domain 2"/>
    <property type="match status" value="1"/>
</dbReference>
<dbReference type="HAMAP" id="MF_00125">
    <property type="entry name" value="HisZ"/>
    <property type="match status" value="1"/>
</dbReference>
<dbReference type="InterPro" id="IPR045864">
    <property type="entry name" value="aa-tRNA-synth_II/BPL/LPL"/>
</dbReference>
<dbReference type="InterPro" id="IPR041715">
    <property type="entry name" value="HisRS-like_core"/>
</dbReference>
<dbReference type="InterPro" id="IPR004516">
    <property type="entry name" value="HisRS/HisZ"/>
</dbReference>
<dbReference type="InterPro" id="IPR004517">
    <property type="entry name" value="HisZ"/>
</dbReference>
<dbReference type="NCBIfam" id="TIGR00443">
    <property type="entry name" value="hisZ_biosyn_reg"/>
    <property type="match status" value="1"/>
</dbReference>
<dbReference type="NCBIfam" id="NF008935">
    <property type="entry name" value="PRK12292.1-1"/>
    <property type="match status" value="1"/>
</dbReference>
<dbReference type="NCBIfam" id="NF009086">
    <property type="entry name" value="PRK12421.1"/>
    <property type="match status" value="1"/>
</dbReference>
<dbReference type="PANTHER" id="PTHR43707:SF1">
    <property type="entry name" value="HISTIDINE--TRNA LIGASE, MITOCHONDRIAL-RELATED"/>
    <property type="match status" value="1"/>
</dbReference>
<dbReference type="PANTHER" id="PTHR43707">
    <property type="entry name" value="HISTIDYL-TRNA SYNTHETASE"/>
    <property type="match status" value="1"/>
</dbReference>
<dbReference type="Pfam" id="PF13393">
    <property type="entry name" value="tRNA-synt_His"/>
    <property type="match status" value="1"/>
</dbReference>
<dbReference type="PIRSF" id="PIRSF001549">
    <property type="entry name" value="His-tRNA_synth"/>
    <property type="match status" value="1"/>
</dbReference>
<dbReference type="SUPFAM" id="SSF55681">
    <property type="entry name" value="Class II aaRS and biotin synthetases"/>
    <property type="match status" value="1"/>
</dbReference>